<accession>P28990</accession>
<accession>Q6S6U1</accession>
<dbReference type="EC" id="2.3.2.27"/>
<dbReference type="EMBL" id="AY665713">
    <property type="protein sequence ID" value="AAT67320.1"/>
    <property type="molecule type" value="Genomic_DNA"/>
</dbReference>
<dbReference type="PIR" id="I36801">
    <property type="entry name" value="WZBEF5"/>
</dbReference>
<dbReference type="PDB" id="1CHC">
    <property type="method" value="NMR"/>
    <property type="chains" value="A=1-63"/>
</dbReference>
<dbReference type="PDBsum" id="1CHC"/>
<dbReference type="SMR" id="P28990"/>
<dbReference type="KEGG" id="vg:2948570"/>
<dbReference type="EvolutionaryTrace" id="P28990"/>
<dbReference type="Proteomes" id="UP000001189">
    <property type="component" value="Segment"/>
</dbReference>
<dbReference type="GO" id="GO:0003677">
    <property type="term" value="F:DNA binding"/>
    <property type="evidence" value="ECO:0007669"/>
    <property type="project" value="UniProtKB-KW"/>
</dbReference>
<dbReference type="GO" id="GO:0061630">
    <property type="term" value="F:ubiquitin protein ligase activity"/>
    <property type="evidence" value="ECO:0007669"/>
    <property type="project" value="TreeGrafter"/>
</dbReference>
<dbReference type="GO" id="GO:0008270">
    <property type="term" value="F:zinc ion binding"/>
    <property type="evidence" value="ECO:0007669"/>
    <property type="project" value="UniProtKB-KW"/>
</dbReference>
<dbReference type="GO" id="GO:0006513">
    <property type="term" value="P:protein monoubiquitination"/>
    <property type="evidence" value="ECO:0007669"/>
    <property type="project" value="TreeGrafter"/>
</dbReference>
<dbReference type="GO" id="GO:0000209">
    <property type="term" value="P:protein polyubiquitination"/>
    <property type="evidence" value="ECO:0007669"/>
    <property type="project" value="TreeGrafter"/>
</dbReference>
<dbReference type="GO" id="GO:0075342">
    <property type="term" value="P:symbiont-mediated disruption of host cell PML body"/>
    <property type="evidence" value="ECO:0000314"/>
    <property type="project" value="UniProtKB"/>
</dbReference>
<dbReference type="GO" id="GO:0039593">
    <property type="term" value="P:symbiont-mediated perturbation of host exit from mitosis"/>
    <property type="evidence" value="ECO:0007669"/>
    <property type="project" value="UniProtKB-KW"/>
</dbReference>
<dbReference type="GO" id="GO:0039648">
    <property type="term" value="P:symbiont-mediated perturbation of host ubiquitin-like protein modification"/>
    <property type="evidence" value="ECO:0007669"/>
    <property type="project" value="UniProtKB-KW"/>
</dbReference>
<dbReference type="GO" id="GO:0039548">
    <property type="term" value="P:symbiont-mediated suppression of host cytoplasmic pattern recognition receptor signaling pathway via inhibition of IRF3 activity"/>
    <property type="evidence" value="ECO:0007669"/>
    <property type="project" value="UniProtKB-KW"/>
</dbReference>
<dbReference type="CDD" id="cd23130">
    <property type="entry name" value="RING-HC_EHV1-like"/>
    <property type="match status" value="1"/>
</dbReference>
<dbReference type="FunFam" id="3.30.40.10:FF:000136">
    <property type="entry name" value="E3 ubiquitin-protein ligase Topors"/>
    <property type="match status" value="1"/>
</dbReference>
<dbReference type="Gene3D" id="3.30.40.10">
    <property type="entry name" value="Zinc/RING finger domain, C3HC4 (zinc finger)"/>
    <property type="match status" value="1"/>
</dbReference>
<dbReference type="InterPro" id="IPR018957">
    <property type="entry name" value="Znf_C3HC4_RING-type"/>
</dbReference>
<dbReference type="InterPro" id="IPR001841">
    <property type="entry name" value="Znf_RING"/>
</dbReference>
<dbReference type="InterPro" id="IPR013083">
    <property type="entry name" value="Znf_RING/FYVE/PHD"/>
</dbReference>
<dbReference type="InterPro" id="IPR017907">
    <property type="entry name" value="Znf_RING_CS"/>
</dbReference>
<dbReference type="PANTHER" id="PTHR46077">
    <property type="entry name" value="E3 UBIQUITIN-PROTEIN LIGASE TOPORS"/>
    <property type="match status" value="1"/>
</dbReference>
<dbReference type="PANTHER" id="PTHR46077:SF1">
    <property type="entry name" value="TOP1 BINDING ARGININE_SERINE RICH PROTEIN, E3 UBIQUITIN LIGASE"/>
    <property type="match status" value="1"/>
</dbReference>
<dbReference type="Pfam" id="PF00097">
    <property type="entry name" value="zf-C3HC4"/>
    <property type="match status" value="1"/>
</dbReference>
<dbReference type="SMART" id="SM00184">
    <property type="entry name" value="RING"/>
    <property type="match status" value="1"/>
</dbReference>
<dbReference type="SUPFAM" id="SSF57850">
    <property type="entry name" value="RING/U-box"/>
    <property type="match status" value="1"/>
</dbReference>
<dbReference type="PROSITE" id="PS00518">
    <property type="entry name" value="ZF_RING_1"/>
    <property type="match status" value="1"/>
</dbReference>
<dbReference type="PROSITE" id="PS50089">
    <property type="entry name" value="ZF_RING_2"/>
    <property type="match status" value="1"/>
</dbReference>
<proteinExistence type="evidence at protein level"/>
<gene>
    <name type="primary">63</name>
</gene>
<evidence type="ECO:0000250" key="1"/>
<evidence type="ECO:0000255" key="2">
    <source>
        <dbReference type="PROSITE-ProRule" id="PRU00175"/>
    </source>
</evidence>
<evidence type="ECO:0000256" key="3">
    <source>
        <dbReference type="SAM" id="MobiDB-lite"/>
    </source>
</evidence>
<evidence type="ECO:0000269" key="4">
    <source>
    </source>
</evidence>
<evidence type="ECO:0000305" key="5"/>
<evidence type="ECO:0007829" key="6">
    <source>
        <dbReference type="PDB" id="1CHC"/>
    </source>
</evidence>
<protein>
    <recommendedName>
        <fullName>E3 ubiquitin-protein ligase ICP0</fullName>
        <ecNumber>2.3.2.27</ecNumber>
    </recommendedName>
    <alternativeName>
        <fullName evidence="5">RING-type E3 ubiquitin transferase ICP0</fullName>
    </alternativeName>
</protein>
<comment type="function">
    <text evidence="4">Evades nuclear antiviral defenses triggered by dsDNA viruses. Acts during the initial stages of lytic infection and the reactivation of latent viral genome. Prevents the antiviral effect of nuclear bodies by degrading host PML and SP100.</text>
</comment>
<comment type="catalytic activity">
    <reaction>
        <text>S-ubiquitinyl-[E2 ubiquitin-conjugating enzyme]-L-cysteine + [acceptor protein]-L-lysine = [E2 ubiquitin-conjugating enzyme]-L-cysteine + N(6)-ubiquitinyl-[acceptor protein]-L-lysine.</text>
        <dbReference type="EC" id="2.3.2.27"/>
    </reaction>
</comment>
<comment type="PTM">
    <text evidence="1">Auto-ubiquitinated.</text>
</comment>
<name>ICP0_EHV1B</name>
<reference key="1">
    <citation type="journal article" date="1992" name="Virology">
        <title>The DNA sequence of equine herpesvirus-1.</title>
        <authorList>
            <person name="Telford E.A.R."/>
            <person name="Watson M.S."/>
            <person name="McBride K."/>
            <person name="Davison A.J."/>
        </authorList>
    </citation>
    <scope>NUCLEOTIDE SEQUENCE [LARGE SCALE GENOMIC DNA]</scope>
</reference>
<reference key="2">
    <citation type="journal article" date="2010" name="J. Virol.">
        <title>Comparison of the biological and biochemical activities of several members of the alphaherpesvirus ICP0 family of proteins.</title>
        <authorList>
            <person name="Everett R.D."/>
            <person name="Boutell C."/>
            <person name="McNair C."/>
            <person name="Grant L."/>
            <person name="Orr A."/>
        </authorList>
    </citation>
    <scope>FUNCTION IN IMMUNE EVASION</scope>
</reference>
<reference key="3">
    <citation type="journal article" date="1993" name="J. Mol. Biol.">
        <title>A novel arrangement of zinc-binding residues and secondary structure in the C3HC4 motif of an alpha herpes virus protein family.</title>
        <authorList>
            <person name="Everett R.D."/>
            <person name="Barlow P.N."/>
            <person name="Milner A."/>
            <person name="Luisi B."/>
            <person name="Orr A."/>
            <person name="Hope G."/>
            <person name="Lyon D."/>
        </authorList>
    </citation>
    <scope>STRUCTURE BY NMR OF 1-63</scope>
</reference>
<reference key="4">
    <citation type="journal article" date="1994" name="J. Mol. Biol.">
        <title>Structure of the C3HC4 domain by 1H-nuclear magnetic resonance spectroscopy. A new structural class of zinc-finger.</title>
        <authorList>
            <person name="Barlow P.N."/>
            <person name="Luisi B."/>
            <person name="Milner A."/>
            <person name="Elliott M."/>
            <person name="Everett R.D."/>
        </authorList>
    </citation>
    <scope>STRUCTURE BY NMR OF 1-63</scope>
</reference>
<sequence length="532" mass="58630">MATVAERCPICLEDPSNYSMALPCLHAFCYVCITRWIRQNPTCPLCKVPVESVVHTIESDSEFKETKVSVDFDYDSEEDEDSFEGQFLAVDSGDAPANISAWNGPMAFVPLNANGTAGAPRLQPLVDWLVERLDQLFETPELALVMRNIVMDTLCEHGCNEEELTRQFWPMFHEDTVPFVTDLIVQAELCVASRPILPIARGRGVEYIDSSSSSSSSEEETDSDIEVDPNNLTDPEDTSDETSTDNSSAQAPRQEDSRPARARPGPPTRGRRRGRRPAAPGPASRRSARLRRRQPRTNSRTNGGDNGEIIDLTLDSDGDTEPADVSGSLNTTDQPVLIPDEEEAAPASPHTSSNSAIICLVSELTPESEEPPRDQPVAPSGSSAGERPMRPRCSLREFARRFMALAPRDSSTSEAAGPSRLGAGPRATEPFSVAVVLVDRSSEGAGLFGGRFAQHVRRRTEDESARRRGNVLLRPRRQSVPPVPYPDIASTSPLIRQGGQRVRDLQRAFQTQPAEPEEMRCPHNCQRYRRNQ</sequence>
<feature type="chain" id="PRO_0000056354" description="E3 ubiquitin-protein ligase ICP0">
    <location>
        <begin position="1"/>
        <end position="532"/>
    </location>
</feature>
<feature type="zinc finger region" description="RING-type" evidence="2">
    <location>
        <begin position="8"/>
        <end position="47"/>
    </location>
</feature>
<feature type="region of interest" description="Disordered" evidence="3">
    <location>
        <begin position="206"/>
        <end position="391"/>
    </location>
</feature>
<feature type="region of interest" description="Disordered" evidence="3">
    <location>
        <begin position="406"/>
        <end position="426"/>
    </location>
</feature>
<feature type="region of interest" description="Disordered" evidence="3">
    <location>
        <begin position="461"/>
        <end position="498"/>
    </location>
</feature>
<feature type="region of interest" description="Disordered" evidence="3">
    <location>
        <begin position="510"/>
        <end position="532"/>
    </location>
</feature>
<feature type="compositionally biased region" description="Acidic residues" evidence="3">
    <location>
        <begin position="217"/>
        <end position="227"/>
    </location>
</feature>
<feature type="compositionally biased region" description="Acidic residues" evidence="3">
    <location>
        <begin position="234"/>
        <end position="243"/>
    </location>
</feature>
<feature type="compositionally biased region" description="Basic residues" evidence="3">
    <location>
        <begin position="286"/>
        <end position="295"/>
    </location>
</feature>
<feature type="binding site">
    <location>
        <position position="8"/>
    </location>
    <ligand>
        <name>Zn(2+)</name>
        <dbReference type="ChEBI" id="CHEBI:29105"/>
        <label>1</label>
    </ligand>
</feature>
<feature type="binding site">
    <location>
        <position position="11"/>
    </location>
    <ligand>
        <name>Zn(2+)</name>
        <dbReference type="ChEBI" id="CHEBI:29105"/>
        <label>1</label>
    </ligand>
</feature>
<feature type="binding site">
    <location>
        <position position="24"/>
    </location>
    <ligand>
        <name>Zn(2+)</name>
        <dbReference type="ChEBI" id="CHEBI:29105"/>
        <label>2</label>
    </ligand>
</feature>
<feature type="binding site">
    <location>
        <position position="26"/>
    </location>
    <ligand>
        <name>Zn(2+)</name>
        <dbReference type="ChEBI" id="CHEBI:29105"/>
        <label>2</label>
    </ligand>
</feature>
<feature type="binding site">
    <location>
        <position position="29"/>
    </location>
    <ligand>
        <name>Zn(2+)</name>
        <dbReference type="ChEBI" id="CHEBI:29105"/>
        <label>1</label>
    </ligand>
</feature>
<feature type="binding site">
    <location>
        <position position="32"/>
    </location>
    <ligand>
        <name>Zn(2+)</name>
        <dbReference type="ChEBI" id="CHEBI:29105"/>
        <label>1</label>
    </ligand>
</feature>
<feature type="binding site">
    <location>
        <position position="43"/>
    </location>
    <ligand>
        <name>Zn(2+)</name>
        <dbReference type="ChEBI" id="CHEBI:29105"/>
        <label>2</label>
    </ligand>
</feature>
<feature type="binding site">
    <location>
        <position position="46"/>
    </location>
    <ligand>
        <name>Zn(2+)</name>
        <dbReference type="ChEBI" id="CHEBI:29105"/>
        <label>2</label>
    </ligand>
</feature>
<feature type="strand" evidence="6">
    <location>
        <begin position="19"/>
        <end position="21"/>
    </location>
</feature>
<feature type="turn" evidence="6">
    <location>
        <begin position="22"/>
        <end position="25"/>
    </location>
</feature>
<feature type="strand" evidence="6">
    <location>
        <begin position="26"/>
        <end position="29"/>
    </location>
</feature>
<feature type="helix" evidence="6">
    <location>
        <begin position="32"/>
        <end position="39"/>
    </location>
</feature>
<feature type="turn" evidence="6">
    <location>
        <begin position="43"/>
        <end position="46"/>
    </location>
</feature>
<organismHost>
    <name type="scientific">Equus caballus</name>
    <name type="common">Horse</name>
    <dbReference type="NCBI Taxonomy" id="9796"/>
</organismHost>
<keyword id="KW-0002">3D-structure</keyword>
<keyword id="KW-0010">Activator</keyword>
<keyword id="KW-0238">DNA-binding</keyword>
<keyword id="KW-0244">Early protein</keyword>
<keyword id="KW-0945">Host-virus interaction</keyword>
<keyword id="KW-1090">Inhibition of host innate immune response by virus</keyword>
<keyword id="KW-1092">Inhibition of host IRF3 by virus</keyword>
<keyword id="KW-1098">Inhibition of host mitotic exit by virus</keyword>
<keyword id="KW-1113">Inhibition of host RLR pathway by virus</keyword>
<keyword id="KW-0479">Metal-binding</keyword>
<keyword id="KW-1121">Modulation of host cell cycle by virus</keyword>
<keyword id="KW-1128">Modulation of host ubiquitin pathway by viral E3 ligase</keyword>
<keyword id="KW-1130">Modulation of host ubiquitin pathway by virus</keyword>
<keyword id="KW-1185">Reference proteome</keyword>
<keyword id="KW-0678">Repressor</keyword>
<keyword id="KW-0804">Transcription</keyword>
<keyword id="KW-0805">Transcription regulation</keyword>
<keyword id="KW-0808">Transferase</keyword>
<keyword id="KW-0832">Ubl conjugation</keyword>
<keyword id="KW-0833">Ubl conjugation pathway</keyword>
<keyword id="KW-0899">Viral immunoevasion</keyword>
<keyword id="KW-0862">Zinc</keyword>
<keyword id="KW-0863">Zinc-finger</keyword>
<organism>
    <name type="scientific">Equine herpesvirus 1 (strain Ab4p)</name>
    <name type="common">EHV-1</name>
    <name type="synonym">Equine abortion virus</name>
    <dbReference type="NCBI Taxonomy" id="31520"/>
    <lineage>
        <taxon>Viruses</taxon>
        <taxon>Duplodnaviria</taxon>
        <taxon>Heunggongvirae</taxon>
        <taxon>Peploviricota</taxon>
        <taxon>Herviviricetes</taxon>
        <taxon>Herpesvirales</taxon>
        <taxon>Orthoherpesviridae</taxon>
        <taxon>Alphaherpesvirinae</taxon>
        <taxon>Varicellovirus</taxon>
        <taxon>Varicellovirus equidalpha1</taxon>
        <taxon>Equid alphaherpesvirus 1</taxon>
    </lineage>
</organism>